<organism>
    <name type="scientific">Dictyostelium discoideum</name>
    <name type="common">Social amoeba</name>
    <dbReference type="NCBI Taxonomy" id="44689"/>
    <lineage>
        <taxon>Eukaryota</taxon>
        <taxon>Amoebozoa</taxon>
        <taxon>Evosea</taxon>
        <taxon>Eumycetozoa</taxon>
        <taxon>Dictyostelia</taxon>
        <taxon>Dictyosteliales</taxon>
        <taxon>Dictyosteliaceae</taxon>
        <taxon>Dictyostelium</taxon>
    </lineage>
</organism>
<name>U512J_DICDI</name>
<comment type="similarity">
    <text evidence="1">Belongs to the UPF0512 family.</text>
</comment>
<accession>Q54BZ6</accession>
<keyword id="KW-1185">Reference proteome</keyword>
<feature type="chain" id="PRO_0000317348" description="UPF0512 protein J">
    <location>
        <begin position="1"/>
        <end position="80"/>
    </location>
</feature>
<proteinExistence type="inferred from homology"/>
<reference key="1">
    <citation type="journal article" date="2005" name="Nature">
        <title>The genome of the social amoeba Dictyostelium discoideum.</title>
        <authorList>
            <person name="Eichinger L."/>
            <person name="Pachebat J.A."/>
            <person name="Gloeckner G."/>
            <person name="Rajandream M.A."/>
            <person name="Sucgang R."/>
            <person name="Berriman M."/>
            <person name="Song J."/>
            <person name="Olsen R."/>
            <person name="Szafranski K."/>
            <person name="Xu Q."/>
            <person name="Tunggal B."/>
            <person name="Kummerfeld S."/>
            <person name="Madera M."/>
            <person name="Konfortov B.A."/>
            <person name="Rivero F."/>
            <person name="Bankier A.T."/>
            <person name="Lehmann R."/>
            <person name="Hamlin N."/>
            <person name="Davies R."/>
            <person name="Gaudet P."/>
            <person name="Fey P."/>
            <person name="Pilcher K."/>
            <person name="Chen G."/>
            <person name="Saunders D."/>
            <person name="Sodergren E.J."/>
            <person name="Davis P."/>
            <person name="Kerhornou A."/>
            <person name="Nie X."/>
            <person name="Hall N."/>
            <person name="Anjard C."/>
            <person name="Hemphill L."/>
            <person name="Bason N."/>
            <person name="Farbrother P."/>
            <person name="Desany B."/>
            <person name="Just E."/>
            <person name="Morio T."/>
            <person name="Rost R."/>
            <person name="Churcher C.M."/>
            <person name="Cooper J."/>
            <person name="Haydock S."/>
            <person name="van Driessche N."/>
            <person name="Cronin A."/>
            <person name="Goodhead I."/>
            <person name="Muzny D.M."/>
            <person name="Mourier T."/>
            <person name="Pain A."/>
            <person name="Lu M."/>
            <person name="Harper D."/>
            <person name="Lindsay R."/>
            <person name="Hauser H."/>
            <person name="James K.D."/>
            <person name="Quiles M."/>
            <person name="Madan Babu M."/>
            <person name="Saito T."/>
            <person name="Buchrieser C."/>
            <person name="Wardroper A."/>
            <person name="Felder M."/>
            <person name="Thangavelu M."/>
            <person name="Johnson D."/>
            <person name="Knights A."/>
            <person name="Loulseged H."/>
            <person name="Mungall K.L."/>
            <person name="Oliver K."/>
            <person name="Price C."/>
            <person name="Quail M.A."/>
            <person name="Urushihara H."/>
            <person name="Hernandez J."/>
            <person name="Rabbinowitsch E."/>
            <person name="Steffen D."/>
            <person name="Sanders M."/>
            <person name="Ma J."/>
            <person name="Kohara Y."/>
            <person name="Sharp S."/>
            <person name="Simmonds M.N."/>
            <person name="Spiegler S."/>
            <person name="Tivey A."/>
            <person name="Sugano S."/>
            <person name="White B."/>
            <person name="Walker D."/>
            <person name="Woodward J.R."/>
            <person name="Winckler T."/>
            <person name="Tanaka Y."/>
            <person name="Shaulsky G."/>
            <person name="Schleicher M."/>
            <person name="Weinstock G.M."/>
            <person name="Rosenthal A."/>
            <person name="Cox E.C."/>
            <person name="Chisholm R.L."/>
            <person name="Gibbs R.A."/>
            <person name="Loomis W.F."/>
            <person name="Platzer M."/>
            <person name="Kay R.R."/>
            <person name="Williams J.G."/>
            <person name="Dear P.H."/>
            <person name="Noegel A.A."/>
            <person name="Barrell B.G."/>
            <person name="Kuspa A."/>
        </authorList>
    </citation>
    <scope>NUCLEOTIDE SEQUENCE [LARGE SCALE GENOMIC DNA]</scope>
    <source>
        <strain>AX4</strain>
    </source>
</reference>
<sequence>MAIFKSISNSTGSMGSSIGFSSKDGFSSNDNSISCFDGGGGGGGLGGWGGIGGFNVGCGGSNANIINIDIDIGRRHRRCC</sequence>
<evidence type="ECO:0000305" key="1"/>
<dbReference type="EMBL" id="AAFI02000201">
    <property type="protein sequence ID" value="EAL60783.1"/>
    <property type="molecule type" value="Genomic_DNA"/>
</dbReference>
<dbReference type="RefSeq" id="XP_629195.1">
    <property type="nucleotide sequence ID" value="XM_629193.1"/>
</dbReference>
<dbReference type="FunCoup" id="Q54BZ6">
    <property type="interactions" value="640"/>
</dbReference>
<dbReference type="PaxDb" id="44689-DDB0266568"/>
<dbReference type="EnsemblProtists" id="EAL60783">
    <property type="protein sequence ID" value="EAL60783"/>
    <property type="gene ID" value="DDB_G0293318"/>
</dbReference>
<dbReference type="GeneID" id="8629154"/>
<dbReference type="KEGG" id="ddi:DDB_G0293318"/>
<dbReference type="dictyBase" id="DDB_G0293318"/>
<dbReference type="HOGENOM" id="CLU_194865_0_0_1"/>
<dbReference type="InParanoid" id="Q54BZ6"/>
<dbReference type="PRO" id="PR:Q54BZ6"/>
<dbReference type="Proteomes" id="UP000002195">
    <property type="component" value="Chromosome 6"/>
</dbReference>
<protein>
    <recommendedName>
        <fullName>UPF0512 protein J</fullName>
    </recommendedName>
</protein>
<gene>
    <name type="ORF">DDB_G0293318</name>
</gene>